<reference evidence="4" key="1">
    <citation type="journal article" date="2020" name="Toxicon">
        <title>Biochemical characterization of the venom from the Mexican scorpion Centruroides ornatus, a dangerous species to humans.</title>
        <authorList>
            <person name="Garcia-Guerrero I.A."/>
            <person name="Carcamo-Noriega E."/>
            <person name="Gomez-Lagunas F."/>
            <person name="Gonzalez-Santillan E."/>
            <person name="Zamudio F.Z."/>
            <person name="Gurrola G.B."/>
            <person name="Possani L.D."/>
        </authorList>
    </citation>
    <scope>PROTEIN SEQUENCE</scope>
    <scope>FUNCTION</scope>
    <scope>SUBCELLULAR LOCATION</scope>
    <scope>MASS SPECTROMETRY</scope>
    <source>
        <tissue evidence="3">Venom</tissue>
    </source>
</reference>
<evidence type="ECO:0000255" key="1">
    <source>
        <dbReference type="PROSITE-ProRule" id="PRU01210"/>
    </source>
</evidence>
<evidence type="ECO:0000269" key="2">
    <source>
    </source>
</evidence>
<evidence type="ECO:0000303" key="3">
    <source>
    </source>
</evidence>
<evidence type="ECO:0000305" key="4"/>
<evidence type="ECO:0000305" key="5">
    <source>
    </source>
</evidence>
<protein>
    <recommendedName>
        <fullName evidence="3">Beta-mammal toxin Co3</fullName>
    </recommendedName>
</protein>
<feature type="chain" id="PRO_0000450097" description="Beta-mammal toxin Co3">
    <location>
        <begin position="1"/>
        <end position="66"/>
    </location>
</feature>
<feature type="domain" description="LCN-type CS-alpha/beta" evidence="1">
    <location>
        <begin position="1"/>
        <end position="66"/>
    </location>
</feature>
<feature type="disulfide bond" evidence="1">
    <location>
        <begin position="12"/>
        <end position="65"/>
    </location>
</feature>
<feature type="disulfide bond" evidence="1">
    <location>
        <begin position="16"/>
        <end position="41"/>
    </location>
</feature>
<feature type="disulfide bond" evidence="1">
    <location>
        <begin position="25"/>
        <end position="46"/>
    </location>
</feature>
<feature type="disulfide bond" evidence="1">
    <location>
        <begin position="29"/>
        <end position="48"/>
    </location>
</feature>
<dbReference type="SMR" id="C0HLF4"/>
<dbReference type="GO" id="GO:0005576">
    <property type="term" value="C:extracellular region"/>
    <property type="evidence" value="ECO:0000314"/>
    <property type="project" value="UniProtKB"/>
</dbReference>
<dbReference type="GO" id="GO:0019871">
    <property type="term" value="F:sodium channel inhibitor activity"/>
    <property type="evidence" value="ECO:0000314"/>
    <property type="project" value="UniProtKB"/>
</dbReference>
<dbReference type="GO" id="GO:0090729">
    <property type="term" value="F:toxin activity"/>
    <property type="evidence" value="ECO:0000314"/>
    <property type="project" value="UniProtKB"/>
</dbReference>
<dbReference type="GO" id="GO:0006952">
    <property type="term" value="P:defense response"/>
    <property type="evidence" value="ECO:0007669"/>
    <property type="project" value="InterPro"/>
</dbReference>
<dbReference type="GO" id="GO:0044493">
    <property type="term" value="P:envenomation resulting in negative regulation of voltage-gated sodium channel activity in another organism"/>
    <property type="evidence" value="ECO:0000314"/>
    <property type="project" value="UniProtKB"/>
</dbReference>
<dbReference type="CDD" id="cd23106">
    <property type="entry name" value="neurotoxins_LC_scorpion"/>
    <property type="match status" value="1"/>
</dbReference>
<dbReference type="FunFam" id="3.30.30.10:FF:000002">
    <property type="entry name" value="Alpha-like toxin BmK-M1"/>
    <property type="match status" value="1"/>
</dbReference>
<dbReference type="Gene3D" id="3.30.30.10">
    <property type="entry name" value="Knottin, scorpion toxin-like"/>
    <property type="match status" value="1"/>
</dbReference>
<dbReference type="InterPro" id="IPR044062">
    <property type="entry name" value="LCN-type_CS_alpha_beta_dom"/>
</dbReference>
<dbReference type="InterPro" id="IPR003614">
    <property type="entry name" value="Scorpion_toxin-like"/>
</dbReference>
<dbReference type="InterPro" id="IPR036574">
    <property type="entry name" value="Scorpion_toxin-like_sf"/>
</dbReference>
<dbReference type="InterPro" id="IPR018218">
    <property type="entry name" value="Scorpion_toxinL"/>
</dbReference>
<dbReference type="PRINTS" id="PR00285">
    <property type="entry name" value="SCORPNTOXIN"/>
</dbReference>
<dbReference type="SMART" id="SM00505">
    <property type="entry name" value="Knot1"/>
    <property type="match status" value="1"/>
</dbReference>
<dbReference type="SUPFAM" id="SSF57095">
    <property type="entry name" value="Scorpion toxin-like"/>
    <property type="match status" value="1"/>
</dbReference>
<dbReference type="PROSITE" id="PS51863">
    <property type="entry name" value="LCN_CSAB"/>
    <property type="match status" value="1"/>
</dbReference>
<keyword id="KW-0903">Direct protein sequencing</keyword>
<keyword id="KW-1015">Disulfide bond</keyword>
<keyword id="KW-0872">Ion channel impairing toxin</keyword>
<keyword id="KW-0528">Neurotoxin</keyword>
<keyword id="KW-0964">Secreted</keyword>
<keyword id="KW-0800">Toxin</keyword>
<keyword id="KW-0738">Voltage-gated sodium channel impairing toxin</keyword>
<sequence>KEGYIVNYYDGCKYPCVKLGDNDYCLRECRLRYYKSAGGYCYAFACWCTHLYEQAVVWPLPNKTCN</sequence>
<comment type="function">
    <text evidence="2">Beta toxins bind voltage-independently at site-4 of sodium channels (Nav) and shift the voltage of activation toward more negative potentials thereby affecting sodium channel activation and promoting spontaneous and repetitive firing (PubMed:31734253). This toxin acts on human Nav1.2/SCN2A, Nav1.4/SCN4A and Nav1.6/SCN8A voltage-gated sodium channels (PubMed:31734253). Also, it reduces the peak of sodium currents in Nav1.5/SCN5A at all potentials (PubMed:31734253). In vivo, is lethal to mice when intraperitoneally injected at a dose of 5ug (PubMed:31734253). No activity is observed when injected into crickets or woodlice (PubMed:31734253).</text>
</comment>
<comment type="subcellular location">
    <subcellularLocation>
        <location evidence="2">Secreted</location>
    </subcellularLocation>
</comment>
<comment type="tissue specificity">
    <text evidence="5">Expressed by the venom gland.</text>
</comment>
<comment type="domain">
    <text evidence="4">Has the structural arrangement of an alpha-helix connected to antiparallel beta-sheets by disulfide bonds (CS-alpha/beta).</text>
</comment>
<comment type="mass spectrometry"/>
<comment type="similarity">
    <text evidence="4">Belongs to the long (4 C-C) scorpion toxin superfamily. Sodium channel inhibitor family. Beta subfamily.</text>
</comment>
<accession>C0HLF4</accession>
<proteinExistence type="evidence at protein level"/>
<name>SCX3_CENOR</name>
<organism evidence="3">
    <name type="scientific">Centruroides ornatus</name>
    <name type="common">Scorpion</name>
    <name type="synonym">Centruroides infamatus ornatus</name>
    <dbReference type="NCBI Taxonomy" id="2338500"/>
    <lineage>
        <taxon>Eukaryota</taxon>
        <taxon>Metazoa</taxon>
        <taxon>Ecdysozoa</taxon>
        <taxon>Arthropoda</taxon>
        <taxon>Chelicerata</taxon>
        <taxon>Arachnida</taxon>
        <taxon>Scorpiones</taxon>
        <taxon>Buthida</taxon>
        <taxon>Buthoidea</taxon>
        <taxon>Buthidae</taxon>
        <taxon>Centruroides</taxon>
    </lineage>
</organism>